<name>Y174_ABVP</name>
<sequence>MARRHKKSKSDVVQINPDATINYVMGILTGANAYIDGLLSGANMYNAWVMQEMSLEGKPIGTYKPDSLRDYIDNLKNTNPRLYSLMKTDPKVFIDELQKTGQLDAFLGATNYARLAKTDKYMIEAGRKYRDTVPSLVKSKSPDTGLAFLQQYAPYGGMTMARLGNILKTGVKVE</sequence>
<feature type="chain" id="PRO_0000384864" description="Uncharacterized protein ORF174">
    <location>
        <begin position="1"/>
        <end position="174"/>
    </location>
</feature>
<keyword id="KW-1185">Reference proteome</keyword>
<proteinExistence type="predicted"/>
<organismHost>
    <name type="scientific">Acidianus convivator</name>
    <dbReference type="NCBI Taxonomy" id="269667"/>
</organismHost>
<dbReference type="EMBL" id="EF432053">
    <property type="protein sequence ID" value="ABP73426.1"/>
    <property type="molecule type" value="Genomic_DNA"/>
</dbReference>
<dbReference type="RefSeq" id="YP_001210340.1">
    <property type="nucleotide sequence ID" value="NC_009452.1"/>
</dbReference>
<dbReference type="GeneID" id="5129830"/>
<dbReference type="KEGG" id="vg:5129830"/>
<dbReference type="Proteomes" id="UP000000513">
    <property type="component" value="Segment"/>
</dbReference>
<gene>
    <name type="ORF">ORF174</name>
</gene>
<reference key="1">
    <citation type="journal article" date="2007" name="Virology">
        <title>Genome of the Acidianus bottle-shaped virus and insights into the replication and packaging mechanisms.</title>
        <authorList>
            <person name="Peng X."/>
            <person name="Basta T."/>
            <person name="Haring M."/>
            <person name="Garrett R.A."/>
            <person name="Prangishvili D."/>
        </authorList>
    </citation>
    <scope>NUCLEOTIDE SEQUENCE [GENOMIC DNA]</scope>
</reference>
<protein>
    <recommendedName>
        <fullName>Uncharacterized protein ORF174</fullName>
    </recommendedName>
</protein>
<organism>
    <name type="scientific">Acidianus bottle-shaped virus (isolate Italy/Pozzuoli)</name>
    <name type="common">ABV</name>
    <dbReference type="NCBI Taxonomy" id="654911"/>
    <lineage>
        <taxon>Viruses</taxon>
        <taxon>Viruses incertae sedis</taxon>
        <taxon>Ampullaviridae</taxon>
        <taxon>Bottigliavirus</taxon>
        <taxon>Bottigliavirus ABV</taxon>
    </lineage>
</organism>
<accession>A4ZUC2</accession>